<comment type="function">
    <text evidence="1">Binds to the 23S rRNA.</text>
</comment>
<comment type="cofactor">
    <cofactor evidence="1">
        <name>Zn(2+)</name>
        <dbReference type="ChEBI" id="CHEBI:29105"/>
    </cofactor>
    <text evidence="1">Binds 1 zinc ion per subunit.</text>
</comment>
<comment type="similarity">
    <text evidence="3">Belongs to the eukaryotic ribosomal protein eL37 family.</text>
</comment>
<proteinExistence type="inferred from homology"/>
<reference key="1">
    <citation type="journal article" date="2001" name="Proc. Natl. Acad. Sci. U.S.A.">
        <title>The complete genome of the crenarchaeon Sulfolobus solfataricus P2.</title>
        <authorList>
            <person name="She Q."/>
            <person name="Singh R.K."/>
            <person name="Confalonieri F."/>
            <person name="Zivanovic Y."/>
            <person name="Allard G."/>
            <person name="Awayez M.J."/>
            <person name="Chan-Weiher C.C.-Y."/>
            <person name="Clausen I.G."/>
            <person name="Curtis B.A."/>
            <person name="De Moors A."/>
            <person name="Erauso G."/>
            <person name="Fletcher C."/>
            <person name="Gordon P.M.K."/>
            <person name="Heikamp-de Jong I."/>
            <person name="Jeffries A.C."/>
            <person name="Kozera C.J."/>
            <person name="Medina N."/>
            <person name="Peng X."/>
            <person name="Thi-Ngoc H.P."/>
            <person name="Redder P."/>
            <person name="Schenk M.E."/>
            <person name="Theriault C."/>
            <person name="Tolstrup N."/>
            <person name="Charlebois R.L."/>
            <person name="Doolittle W.F."/>
            <person name="Duguet M."/>
            <person name="Gaasterland T."/>
            <person name="Garrett R.A."/>
            <person name="Ragan M.A."/>
            <person name="Sensen C.W."/>
            <person name="Van der Oost J."/>
        </authorList>
    </citation>
    <scope>NUCLEOTIDE SEQUENCE [LARGE SCALE GENOMIC DNA]</scope>
    <source>
        <strain>ATCC 35092 / DSM 1617 / JCM 11322 / P2</strain>
    </source>
</reference>
<accession>Q97ZQ1</accession>
<sequence>MKGTPSFGKMNKSHTHIRCRRCGRNAYNVSKHYCAACGFGRTKKIRRYSWQNKKVNGVRIR</sequence>
<protein>
    <recommendedName>
        <fullName evidence="3">Large ribosomal subunit protein eL37</fullName>
    </recommendedName>
    <alternativeName>
        <fullName>50S ribosomal protein L37e</fullName>
    </alternativeName>
</protein>
<organism>
    <name type="scientific">Saccharolobus solfataricus (strain ATCC 35092 / DSM 1617 / JCM 11322 / P2)</name>
    <name type="common">Sulfolobus solfataricus</name>
    <dbReference type="NCBI Taxonomy" id="273057"/>
    <lineage>
        <taxon>Archaea</taxon>
        <taxon>Thermoproteota</taxon>
        <taxon>Thermoprotei</taxon>
        <taxon>Sulfolobales</taxon>
        <taxon>Sulfolobaceae</taxon>
        <taxon>Saccharolobus</taxon>
    </lineage>
</organism>
<gene>
    <name type="primary">rpl37e</name>
    <name type="ordered locus">SSO6453</name>
</gene>
<feature type="chain" id="PRO_0000139739" description="Large ribosomal subunit protein eL37">
    <location>
        <begin position="1"/>
        <end position="61"/>
    </location>
</feature>
<feature type="zinc finger region" description="C4-type" evidence="2">
    <location>
        <begin position="19"/>
        <end position="37"/>
    </location>
</feature>
<feature type="binding site" evidence="1">
    <location>
        <position position="19"/>
    </location>
    <ligand>
        <name>Zn(2+)</name>
        <dbReference type="ChEBI" id="CHEBI:29105"/>
    </ligand>
</feature>
<feature type="binding site" evidence="1">
    <location>
        <position position="22"/>
    </location>
    <ligand>
        <name>Zn(2+)</name>
        <dbReference type="ChEBI" id="CHEBI:29105"/>
    </ligand>
</feature>
<feature type="binding site" evidence="1">
    <location>
        <position position="34"/>
    </location>
    <ligand>
        <name>Zn(2+)</name>
        <dbReference type="ChEBI" id="CHEBI:29105"/>
    </ligand>
</feature>
<feature type="binding site" evidence="1">
    <location>
        <position position="37"/>
    </location>
    <ligand>
        <name>Zn(2+)</name>
        <dbReference type="ChEBI" id="CHEBI:29105"/>
    </ligand>
</feature>
<dbReference type="EMBL" id="AE006641">
    <property type="protein sequence ID" value="AAK41052.1"/>
    <property type="molecule type" value="Genomic_DNA"/>
</dbReference>
<dbReference type="PIR" id="E90224">
    <property type="entry name" value="E90224"/>
</dbReference>
<dbReference type="SMR" id="Q97ZQ1"/>
<dbReference type="FunCoup" id="Q97ZQ1">
    <property type="interactions" value="135"/>
</dbReference>
<dbReference type="STRING" id="273057.SSO6453"/>
<dbReference type="PaxDb" id="273057-SSO6453"/>
<dbReference type="EnsemblBacteria" id="AAK41052">
    <property type="protein sequence ID" value="AAK41052"/>
    <property type="gene ID" value="SSO6453"/>
</dbReference>
<dbReference type="KEGG" id="sso:SSO6453"/>
<dbReference type="PATRIC" id="fig|273057.12.peg.754"/>
<dbReference type="eggNOG" id="arCOG04126">
    <property type="taxonomic scope" value="Archaea"/>
</dbReference>
<dbReference type="HOGENOM" id="CLU_208825_0_0_2"/>
<dbReference type="InParanoid" id="Q97ZQ1"/>
<dbReference type="PhylomeDB" id="Q97ZQ1"/>
<dbReference type="Proteomes" id="UP000001974">
    <property type="component" value="Chromosome"/>
</dbReference>
<dbReference type="GO" id="GO:0022625">
    <property type="term" value="C:cytosolic large ribosomal subunit"/>
    <property type="evidence" value="ECO:0000318"/>
    <property type="project" value="GO_Central"/>
</dbReference>
<dbReference type="GO" id="GO:0003723">
    <property type="term" value="F:RNA binding"/>
    <property type="evidence" value="ECO:0000318"/>
    <property type="project" value="GO_Central"/>
</dbReference>
<dbReference type="GO" id="GO:0019843">
    <property type="term" value="F:rRNA binding"/>
    <property type="evidence" value="ECO:0007669"/>
    <property type="project" value="UniProtKB-KW"/>
</dbReference>
<dbReference type="GO" id="GO:0003735">
    <property type="term" value="F:structural constituent of ribosome"/>
    <property type="evidence" value="ECO:0007669"/>
    <property type="project" value="InterPro"/>
</dbReference>
<dbReference type="GO" id="GO:0008270">
    <property type="term" value="F:zinc ion binding"/>
    <property type="evidence" value="ECO:0007669"/>
    <property type="project" value="UniProtKB-UniRule"/>
</dbReference>
<dbReference type="GO" id="GO:0006412">
    <property type="term" value="P:translation"/>
    <property type="evidence" value="ECO:0007669"/>
    <property type="project" value="UniProtKB-UniRule"/>
</dbReference>
<dbReference type="FunFam" id="2.20.25.30:FF:000003">
    <property type="entry name" value="50S ribosomal protein L37e"/>
    <property type="match status" value="1"/>
</dbReference>
<dbReference type="Gene3D" id="2.20.25.30">
    <property type="match status" value="1"/>
</dbReference>
<dbReference type="HAMAP" id="MF_00547">
    <property type="entry name" value="Ribosomal_eL37"/>
    <property type="match status" value="1"/>
</dbReference>
<dbReference type="InterPro" id="IPR001569">
    <property type="entry name" value="Ribosomal_eL37"/>
</dbReference>
<dbReference type="InterPro" id="IPR011331">
    <property type="entry name" value="Ribosomal_eL37/eL43"/>
</dbReference>
<dbReference type="InterPro" id="IPR018267">
    <property type="entry name" value="Ribosomal_eL37_CS"/>
</dbReference>
<dbReference type="InterPro" id="IPR011332">
    <property type="entry name" value="Ribosomal_zn-bd"/>
</dbReference>
<dbReference type="NCBIfam" id="NF003214">
    <property type="entry name" value="PRK04179.1"/>
    <property type="match status" value="1"/>
</dbReference>
<dbReference type="PANTHER" id="PTHR10768">
    <property type="entry name" value="60S RIBOSOMAL PROTEIN L37"/>
    <property type="match status" value="1"/>
</dbReference>
<dbReference type="PANTHER" id="PTHR10768:SF0">
    <property type="entry name" value="RIBOSOMAL PROTEIN L37"/>
    <property type="match status" value="1"/>
</dbReference>
<dbReference type="Pfam" id="PF01907">
    <property type="entry name" value="Ribosomal_L37e"/>
    <property type="match status" value="1"/>
</dbReference>
<dbReference type="SUPFAM" id="SSF57829">
    <property type="entry name" value="Zn-binding ribosomal proteins"/>
    <property type="match status" value="1"/>
</dbReference>
<dbReference type="PROSITE" id="PS01077">
    <property type="entry name" value="RIBOSOMAL_L37E"/>
    <property type="match status" value="1"/>
</dbReference>
<name>RL37_SACS2</name>
<keyword id="KW-0479">Metal-binding</keyword>
<keyword id="KW-1185">Reference proteome</keyword>
<keyword id="KW-0687">Ribonucleoprotein</keyword>
<keyword id="KW-0689">Ribosomal protein</keyword>
<keyword id="KW-0694">RNA-binding</keyword>
<keyword id="KW-0699">rRNA-binding</keyword>
<keyword id="KW-0862">Zinc</keyword>
<keyword id="KW-0863">Zinc-finger</keyword>
<evidence type="ECO:0000250" key="1"/>
<evidence type="ECO:0000255" key="2"/>
<evidence type="ECO:0000305" key="3"/>